<protein>
    <recommendedName>
        <fullName evidence="1">L-fucose isomerase</fullName>
        <ecNumber evidence="1">5.3.1.25</ecNumber>
    </recommendedName>
    <alternativeName>
        <fullName evidence="1">6-deoxy-L-galactose isomerase</fullName>
    </alternativeName>
    <alternativeName>
        <fullName>FucIase</fullName>
    </alternativeName>
</protein>
<sequence length="591" mass="64990">MKKISLPKIGIRPVIDGRRMGVRESLEEQTMNMAKATAALLTEKLRHACGAAVECVISDTCIAGMAEAAACEEKFSSQNVGLTITVTPCWCYGSETIDMDPTRPKAIWGFNGTERPGAVYLAAALAAHSQKGIPAFSIYGHDVQDADDTSIPADVEEKLLRFARAGLAVASMKGKSYLSLGGVSMGIAGSIVDHNFFESWLGMKVQAVDMTELRRRIDQKIYDEAELEMALAWADKNFRYGEDENNKQYQRNAEQSRAVLRESLLMAMCIRDMMQGNSKLADIGRVEESLGYNAIAAGFQGQRHWTDQYPNGDTAEAILNSSFDWNGVRKPFVVATENDSLNGVAMLMGHQLTGTAQVFADVRTYWSPEAIERVTGHKLDGLAEHGIIHLINSGSAALDGSCKQRDSEGKPTMKPHWEISQQEADACLAATEWCPAIHEYFRGGGYSSRFLTEGGVPFTMTRVNIIKGLGPVLQIAEGWSVELPKDVHDILNKRTNSTWPTTWFAPRLTGKGPFTDVYSVMANWGANHGVLTIGHVGADFITLASMLRIPVCMHNVEETKVYRPSAWAAHGMDIEGQDYRACQNYGPLYKR</sequence>
<name>FUCI_ECOUT</name>
<proteinExistence type="inferred from homology"/>
<gene>
    <name evidence="1" type="primary">fucI</name>
    <name type="ordered locus">UTI89_C3174</name>
</gene>
<keyword id="KW-0119">Carbohydrate metabolism</keyword>
<keyword id="KW-0963">Cytoplasm</keyword>
<keyword id="KW-0294">Fucose metabolism</keyword>
<keyword id="KW-0413">Isomerase</keyword>
<keyword id="KW-0464">Manganese</keyword>
<keyword id="KW-0479">Metal-binding</keyword>
<reference key="1">
    <citation type="journal article" date="2006" name="Proc. Natl. Acad. Sci. U.S.A.">
        <title>Identification of genes subject to positive selection in uropathogenic strains of Escherichia coli: a comparative genomics approach.</title>
        <authorList>
            <person name="Chen S.L."/>
            <person name="Hung C.-S."/>
            <person name="Xu J."/>
            <person name="Reigstad C.S."/>
            <person name="Magrini V."/>
            <person name="Sabo A."/>
            <person name="Blasiar D."/>
            <person name="Bieri T."/>
            <person name="Meyer R.R."/>
            <person name="Ozersky P."/>
            <person name="Armstrong J.R."/>
            <person name="Fulton R.S."/>
            <person name="Latreille J.P."/>
            <person name="Spieth J."/>
            <person name="Hooton T.M."/>
            <person name="Mardis E.R."/>
            <person name="Hultgren S.J."/>
            <person name="Gordon J.I."/>
        </authorList>
    </citation>
    <scope>NUCLEOTIDE SEQUENCE [LARGE SCALE GENOMIC DNA]</scope>
    <source>
        <strain>UTI89 / UPEC</strain>
    </source>
</reference>
<organism>
    <name type="scientific">Escherichia coli (strain UTI89 / UPEC)</name>
    <dbReference type="NCBI Taxonomy" id="364106"/>
    <lineage>
        <taxon>Bacteria</taxon>
        <taxon>Pseudomonadati</taxon>
        <taxon>Pseudomonadota</taxon>
        <taxon>Gammaproteobacteria</taxon>
        <taxon>Enterobacterales</taxon>
        <taxon>Enterobacteriaceae</taxon>
        <taxon>Escherichia</taxon>
    </lineage>
</organism>
<comment type="function">
    <text evidence="1">Converts the aldose L-fucose into the corresponding ketose L-fuculose.</text>
</comment>
<comment type="catalytic activity">
    <reaction evidence="1">
        <text>L-fucose = L-fuculose</text>
        <dbReference type="Rhea" id="RHEA:17233"/>
        <dbReference type="ChEBI" id="CHEBI:2181"/>
        <dbReference type="ChEBI" id="CHEBI:17617"/>
        <dbReference type="EC" id="5.3.1.25"/>
    </reaction>
</comment>
<comment type="cofactor">
    <cofactor evidence="1">
        <name>Mn(2+)</name>
        <dbReference type="ChEBI" id="CHEBI:29035"/>
    </cofactor>
</comment>
<comment type="pathway">
    <text evidence="1">Carbohydrate degradation; L-fucose degradation; L-lactaldehyde and glycerone phosphate from L-fucose: step 1/3.</text>
</comment>
<comment type="subunit">
    <text evidence="1">Homohexamer.</text>
</comment>
<comment type="subcellular location">
    <subcellularLocation>
        <location evidence="1">Cytoplasm</location>
    </subcellularLocation>
</comment>
<comment type="similarity">
    <text evidence="1">Belongs to the L-fucose isomerase family.</text>
</comment>
<feature type="chain" id="PRO_1000067220" description="L-fucose isomerase">
    <location>
        <begin position="1"/>
        <end position="591"/>
    </location>
</feature>
<feature type="active site" description="Proton acceptor" evidence="1">
    <location>
        <position position="337"/>
    </location>
</feature>
<feature type="active site" description="Proton acceptor" evidence="1">
    <location>
        <position position="361"/>
    </location>
</feature>
<feature type="binding site" evidence="1">
    <location>
        <position position="337"/>
    </location>
    <ligand>
        <name>Mn(2+)</name>
        <dbReference type="ChEBI" id="CHEBI:29035"/>
    </ligand>
</feature>
<feature type="binding site" evidence="1">
    <location>
        <position position="361"/>
    </location>
    <ligand>
        <name>Mn(2+)</name>
        <dbReference type="ChEBI" id="CHEBI:29035"/>
    </ligand>
</feature>
<feature type="binding site" evidence="1">
    <location>
        <position position="528"/>
    </location>
    <ligand>
        <name>Mn(2+)</name>
        <dbReference type="ChEBI" id="CHEBI:29035"/>
    </ligand>
</feature>
<accession>Q1R7N8</accession>
<dbReference type="EC" id="5.3.1.25" evidence="1"/>
<dbReference type="EMBL" id="CP000243">
    <property type="protein sequence ID" value="ABE08626.1"/>
    <property type="molecule type" value="Genomic_DNA"/>
</dbReference>
<dbReference type="RefSeq" id="WP_000724161.1">
    <property type="nucleotide sequence ID" value="NZ_CP064825.1"/>
</dbReference>
<dbReference type="SMR" id="Q1R7N8"/>
<dbReference type="KEGG" id="eci:UTI89_C3174"/>
<dbReference type="HOGENOM" id="CLU_033326_1_0_6"/>
<dbReference type="UniPathway" id="UPA00563">
    <property type="reaction ID" value="UER00624"/>
</dbReference>
<dbReference type="Proteomes" id="UP000001952">
    <property type="component" value="Chromosome"/>
</dbReference>
<dbReference type="GO" id="GO:0005737">
    <property type="term" value="C:cytoplasm"/>
    <property type="evidence" value="ECO:0007669"/>
    <property type="project" value="UniProtKB-SubCell"/>
</dbReference>
<dbReference type="GO" id="GO:0008790">
    <property type="term" value="F:arabinose isomerase activity"/>
    <property type="evidence" value="ECO:0007669"/>
    <property type="project" value="TreeGrafter"/>
</dbReference>
<dbReference type="GO" id="GO:0008736">
    <property type="term" value="F:L-fucose isomerase activity"/>
    <property type="evidence" value="ECO:0007669"/>
    <property type="project" value="UniProtKB-UniRule"/>
</dbReference>
<dbReference type="GO" id="GO:0030145">
    <property type="term" value="F:manganese ion binding"/>
    <property type="evidence" value="ECO:0007669"/>
    <property type="project" value="UniProtKB-UniRule"/>
</dbReference>
<dbReference type="GO" id="GO:0019571">
    <property type="term" value="P:D-arabinose catabolic process"/>
    <property type="evidence" value="ECO:0007669"/>
    <property type="project" value="TreeGrafter"/>
</dbReference>
<dbReference type="GO" id="GO:0042355">
    <property type="term" value="P:L-fucose catabolic process"/>
    <property type="evidence" value="ECO:0007669"/>
    <property type="project" value="UniProtKB-UniRule"/>
</dbReference>
<dbReference type="CDD" id="cd03556">
    <property type="entry name" value="L-fucose_isomerase"/>
    <property type="match status" value="1"/>
</dbReference>
<dbReference type="FunFam" id="3.20.14.10:FF:000001">
    <property type="entry name" value="L-fucose isomerase"/>
    <property type="match status" value="1"/>
</dbReference>
<dbReference type="FunFam" id="3.40.275.10:FF:000001">
    <property type="entry name" value="L-fucose isomerase"/>
    <property type="match status" value="1"/>
</dbReference>
<dbReference type="FunFam" id="3.40.50.1070:FF:000001">
    <property type="entry name" value="L-fucose isomerase"/>
    <property type="match status" value="1"/>
</dbReference>
<dbReference type="Gene3D" id="3.40.50.1070">
    <property type="match status" value="1"/>
</dbReference>
<dbReference type="Gene3D" id="3.40.275.10">
    <property type="entry name" value="L-fucose Isomerase, Chain A, domain 2"/>
    <property type="match status" value="1"/>
</dbReference>
<dbReference type="Gene3D" id="3.20.14.10">
    <property type="entry name" value="L-fucose/L-arabinose isomerase, C-terminal"/>
    <property type="match status" value="1"/>
</dbReference>
<dbReference type="HAMAP" id="MF_01254">
    <property type="entry name" value="Fucose_iso"/>
    <property type="match status" value="1"/>
</dbReference>
<dbReference type="InterPro" id="IPR004216">
    <property type="entry name" value="Fuc/Ara_isomerase_C"/>
</dbReference>
<dbReference type="InterPro" id="IPR038393">
    <property type="entry name" value="Fuc_iso_dom3_sf"/>
</dbReference>
<dbReference type="InterPro" id="IPR015888">
    <property type="entry name" value="Fuc_isomerase_C"/>
</dbReference>
<dbReference type="InterPro" id="IPR038391">
    <property type="entry name" value="Fucose_iso_dom1_sf"/>
</dbReference>
<dbReference type="InterPro" id="IPR012888">
    <property type="entry name" value="Fucose_iso_N1"/>
</dbReference>
<dbReference type="InterPro" id="IPR005763">
    <property type="entry name" value="Fucose_isomerase"/>
</dbReference>
<dbReference type="InterPro" id="IPR038392">
    <property type="entry name" value="Fucose_isomerase_dom2_sf"/>
</dbReference>
<dbReference type="InterPro" id="IPR009015">
    <property type="entry name" value="Fucose_isomerase_N/cen_sf"/>
</dbReference>
<dbReference type="InterPro" id="IPR012889">
    <property type="entry name" value="Fucose_isomerase_N2"/>
</dbReference>
<dbReference type="NCBIfam" id="TIGR01089">
    <property type="entry name" value="fucI"/>
    <property type="match status" value="1"/>
</dbReference>
<dbReference type="NCBIfam" id="NF008220">
    <property type="entry name" value="PRK10991.1"/>
    <property type="match status" value="1"/>
</dbReference>
<dbReference type="PANTHER" id="PTHR37840">
    <property type="entry name" value="L-FUCOSE ISOMERASE"/>
    <property type="match status" value="1"/>
</dbReference>
<dbReference type="PANTHER" id="PTHR37840:SF1">
    <property type="entry name" value="L-FUCOSE ISOMERASE"/>
    <property type="match status" value="1"/>
</dbReference>
<dbReference type="Pfam" id="PF02952">
    <property type="entry name" value="Fucose_iso_C"/>
    <property type="match status" value="1"/>
</dbReference>
<dbReference type="Pfam" id="PF07881">
    <property type="entry name" value="Fucose_iso_N1"/>
    <property type="match status" value="1"/>
</dbReference>
<dbReference type="Pfam" id="PF07882">
    <property type="entry name" value="Fucose_iso_N2"/>
    <property type="match status" value="1"/>
</dbReference>
<dbReference type="SUPFAM" id="SSF50443">
    <property type="entry name" value="FucI/AraA C-terminal domain-like"/>
    <property type="match status" value="1"/>
</dbReference>
<dbReference type="SUPFAM" id="SSF53743">
    <property type="entry name" value="FucI/AraA N-terminal and middle domains"/>
    <property type="match status" value="1"/>
</dbReference>
<evidence type="ECO:0000255" key="1">
    <source>
        <dbReference type="HAMAP-Rule" id="MF_01254"/>
    </source>
</evidence>